<reference key="1">
    <citation type="journal article" date="2009" name="PLoS ONE">
        <title>Complete genome sequence of Francisella tularensis subspecies holarctica FTNF002-00.</title>
        <authorList>
            <person name="Barabote R.D."/>
            <person name="Xie G."/>
            <person name="Brettin T.S."/>
            <person name="Hinrichs S.H."/>
            <person name="Fey P.D."/>
            <person name="Jay J.J."/>
            <person name="Engle J.L."/>
            <person name="Godbole S.D."/>
            <person name="Noronha J.M."/>
            <person name="Scheuermann R.H."/>
            <person name="Zhou L.W."/>
            <person name="Lion C."/>
            <person name="Dempsey M.P."/>
        </authorList>
    </citation>
    <scope>NUCLEOTIDE SEQUENCE [LARGE SCALE GENOMIC DNA]</scope>
    <source>
        <strain>FTNF002-00 / FTA</strain>
    </source>
</reference>
<comment type="function">
    <text evidence="1">Involved in unsaturated fatty acids biosynthesis. Catalyzes the dehydration of short chain beta-hydroxyacyl-ACPs and long chain saturated and unsaturated beta-hydroxyacyl-ACPs.</text>
</comment>
<comment type="catalytic activity">
    <reaction evidence="1">
        <text>a (3R)-hydroxyacyl-[ACP] = a (2E)-enoyl-[ACP] + H2O</text>
        <dbReference type="Rhea" id="RHEA:13097"/>
        <dbReference type="Rhea" id="RHEA-COMP:9925"/>
        <dbReference type="Rhea" id="RHEA-COMP:9945"/>
        <dbReference type="ChEBI" id="CHEBI:15377"/>
        <dbReference type="ChEBI" id="CHEBI:78784"/>
        <dbReference type="ChEBI" id="CHEBI:78827"/>
        <dbReference type="EC" id="4.2.1.59"/>
    </reaction>
</comment>
<comment type="subcellular location">
    <subcellularLocation>
        <location evidence="1">Cytoplasm</location>
    </subcellularLocation>
</comment>
<comment type="similarity">
    <text evidence="1">Belongs to the thioester dehydratase family. FabZ subfamily.</text>
</comment>
<sequence length="163" mass="18150">MSQFNQNNKQIDVMGIRKILPHRYPFALLDKIVDWSVEDRTIVAQKNVTINEDFFNGHFPDFPVMPGVLIVEAMAQATAILGELMAETLFAHVVEKAGGGRRTFMLAGIDKVRVKRPVVPGDVLVIESRMVKQKNIICTAESVAKVDGQIVCSAELMAAYKDY</sequence>
<accession>A7NAP4</accession>
<name>FABZ_FRATF</name>
<gene>
    <name evidence="1" type="primary">fabZ</name>
    <name type="ordered locus">FTA_0571</name>
</gene>
<proteinExistence type="inferred from homology"/>
<protein>
    <recommendedName>
        <fullName evidence="1">3-hydroxyacyl-[acyl-carrier-protein] dehydratase FabZ</fullName>
        <ecNumber evidence="1">4.2.1.59</ecNumber>
    </recommendedName>
    <alternativeName>
        <fullName evidence="1">(3R)-hydroxymyristoyl-[acyl-carrier-protein] dehydratase</fullName>
        <shortName evidence="1">(3R)-hydroxymyristoyl-ACP dehydrase</shortName>
    </alternativeName>
    <alternativeName>
        <fullName evidence="1">Beta-hydroxyacyl-ACP dehydratase</fullName>
    </alternativeName>
</protein>
<evidence type="ECO:0000255" key="1">
    <source>
        <dbReference type="HAMAP-Rule" id="MF_00406"/>
    </source>
</evidence>
<feature type="chain" id="PRO_1000049845" description="3-hydroxyacyl-[acyl-carrier-protein] dehydratase FabZ">
    <location>
        <begin position="1"/>
        <end position="163"/>
    </location>
</feature>
<feature type="active site" evidence="1">
    <location>
        <position position="58"/>
    </location>
</feature>
<keyword id="KW-0963">Cytoplasm</keyword>
<keyword id="KW-0441">Lipid A biosynthesis</keyword>
<keyword id="KW-0444">Lipid biosynthesis</keyword>
<keyword id="KW-0443">Lipid metabolism</keyword>
<keyword id="KW-0456">Lyase</keyword>
<organism>
    <name type="scientific">Francisella tularensis subsp. holarctica (strain FTNF002-00 / FTA)</name>
    <dbReference type="NCBI Taxonomy" id="458234"/>
    <lineage>
        <taxon>Bacteria</taxon>
        <taxon>Pseudomonadati</taxon>
        <taxon>Pseudomonadota</taxon>
        <taxon>Gammaproteobacteria</taxon>
        <taxon>Thiotrichales</taxon>
        <taxon>Francisellaceae</taxon>
        <taxon>Francisella</taxon>
    </lineage>
</organism>
<dbReference type="EC" id="4.2.1.59" evidence="1"/>
<dbReference type="EMBL" id="CP000803">
    <property type="protein sequence ID" value="ABU61047.1"/>
    <property type="molecule type" value="Genomic_DNA"/>
</dbReference>
<dbReference type="RefSeq" id="WP_003014877.1">
    <property type="nucleotide sequence ID" value="NC_009749.1"/>
</dbReference>
<dbReference type="SMR" id="A7NAP4"/>
<dbReference type="GeneID" id="75264783"/>
<dbReference type="KEGG" id="fta:FTA_0571"/>
<dbReference type="HOGENOM" id="CLU_078912_1_2_6"/>
<dbReference type="GO" id="GO:0005737">
    <property type="term" value="C:cytoplasm"/>
    <property type="evidence" value="ECO:0007669"/>
    <property type="project" value="UniProtKB-SubCell"/>
</dbReference>
<dbReference type="GO" id="GO:0016020">
    <property type="term" value="C:membrane"/>
    <property type="evidence" value="ECO:0007669"/>
    <property type="project" value="GOC"/>
</dbReference>
<dbReference type="GO" id="GO:0019171">
    <property type="term" value="F:(3R)-hydroxyacyl-[acyl-carrier-protein] dehydratase activity"/>
    <property type="evidence" value="ECO:0007669"/>
    <property type="project" value="UniProtKB-EC"/>
</dbReference>
<dbReference type="GO" id="GO:0006633">
    <property type="term" value="P:fatty acid biosynthetic process"/>
    <property type="evidence" value="ECO:0007669"/>
    <property type="project" value="UniProtKB-UniRule"/>
</dbReference>
<dbReference type="GO" id="GO:0009245">
    <property type="term" value="P:lipid A biosynthetic process"/>
    <property type="evidence" value="ECO:0007669"/>
    <property type="project" value="UniProtKB-UniRule"/>
</dbReference>
<dbReference type="CDD" id="cd01288">
    <property type="entry name" value="FabZ"/>
    <property type="match status" value="1"/>
</dbReference>
<dbReference type="FunFam" id="3.10.129.10:FF:000001">
    <property type="entry name" value="3-hydroxyacyl-[acyl-carrier-protein] dehydratase FabZ"/>
    <property type="match status" value="1"/>
</dbReference>
<dbReference type="Gene3D" id="3.10.129.10">
    <property type="entry name" value="Hotdog Thioesterase"/>
    <property type="match status" value="1"/>
</dbReference>
<dbReference type="HAMAP" id="MF_00406">
    <property type="entry name" value="FabZ"/>
    <property type="match status" value="1"/>
</dbReference>
<dbReference type="InterPro" id="IPR013114">
    <property type="entry name" value="FabA_FabZ"/>
</dbReference>
<dbReference type="InterPro" id="IPR010084">
    <property type="entry name" value="FabZ"/>
</dbReference>
<dbReference type="InterPro" id="IPR029069">
    <property type="entry name" value="HotDog_dom_sf"/>
</dbReference>
<dbReference type="NCBIfam" id="TIGR01750">
    <property type="entry name" value="fabZ"/>
    <property type="match status" value="1"/>
</dbReference>
<dbReference type="NCBIfam" id="NF000582">
    <property type="entry name" value="PRK00006.1"/>
    <property type="match status" value="1"/>
</dbReference>
<dbReference type="PANTHER" id="PTHR30272">
    <property type="entry name" value="3-HYDROXYACYL-[ACYL-CARRIER-PROTEIN] DEHYDRATASE"/>
    <property type="match status" value="1"/>
</dbReference>
<dbReference type="PANTHER" id="PTHR30272:SF1">
    <property type="entry name" value="3-HYDROXYACYL-[ACYL-CARRIER-PROTEIN] DEHYDRATASE"/>
    <property type="match status" value="1"/>
</dbReference>
<dbReference type="Pfam" id="PF07977">
    <property type="entry name" value="FabA"/>
    <property type="match status" value="1"/>
</dbReference>
<dbReference type="SUPFAM" id="SSF54637">
    <property type="entry name" value="Thioesterase/thiol ester dehydrase-isomerase"/>
    <property type="match status" value="1"/>
</dbReference>